<keyword id="KW-1185">Reference proteome</keyword>
<keyword id="KW-0677">Repeat</keyword>
<keyword id="KW-0808">Transferase</keyword>
<proteinExistence type="inferred from homology"/>
<dbReference type="EMBL" id="CU928161">
    <property type="protein sequence ID" value="CAR01404.1"/>
    <property type="molecule type" value="Genomic_DNA"/>
</dbReference>
<dbReference type="RefSeq" id="WP_000122880.1">
    <property type="nucleotide sequence ID" value="NC_011742.1"/>
</dbReference>
<dbReference type="SMR" id="B7MAF8"/>
<dbReference type="KEGG" id="ecz:ECS88_0038"/>
<dbReference type="HOGENOM" id="CLU_064827_4_2_6"/>
<dbReference type="UniPathway" id="UPA00117"/>
<dbReference type="Proteomes" id="UP000000747">
    <property type="component" value="Chromosome"/>
</dbReference>
<dbReference type="GO" id="GO:0016740">
    <property type="term" value="F:transferase activity"/>
    <property type="evidence" value="ECO:0007669"/>
    <property type="project" value="UniProtKB-KW"/>
</dbReference>
<dbReference type="GO" id="GO:0009437">
    <property type="term" value="P:carnitine metabolic process"/>
    <property type="evidence" value="ECO:0007669"/>
    <property type="project" value="UniProtKB-UniRule"/>
</dbReference>
<dbReference type="CDD" id="cd04745">
    <property type="entry name" value="LbH_paaY_like"/>
    <property type="match status" value="1"/>
</dbReference>
<dbReference type="FunFam" id="2.160.10.10:FF:000012">
    <property type="entry name" value="Carnitine operon protein CaiE"/>
    <property type="match status" value="1"/>
</dbReference>
<dbReference type="Gene3D" id="2.160.10.10">
    <property type="entry name" value="Hexapeptide repeat proteins"/>
    <property type="match status" value="1"/>
</dbReference>
<dbReference type="HAMAP" id="MF_01525">
    <property type="entry name" value="CaiE"/>
    <property type="match status" value="1"/>
</dbReference>
<dbReference type="InterPro" id="IPR023446">
    <property type="entry name" value="CaiE"/>
</dbReference>
<dbReference type="InterPro" id="IPR001451">
    <property type="entry name" value="Hexapep"/>
</dbReference>
<dbReference type="InterPro" id="IPR050484">
    <property type="entry name" value="Transf_Hexapept/Carb_Anhydrase"/>
</dbReference>
<dbReference type="InterPro" id="IPR011004">
    <property type="entry name" value="Trimer_LpxA-like_sf"/>
</dbReference>
<dbReference type="NCBIfam" id="NF010150">
    <property type="entry name" value="PRK13627.1"/>
    <property type="match status" value="1"/>
</dbReference>
<dbReference type="PANTHER" id="PTHR13061">
    <property type="entry name" value="DYNACTIN SUBUNIT P25"/>
    <property type="match status" value="1"/>
</dbReference>
<dbReference type="PANTHER" id="PTHR13061:SF29">
    <property type="entry name" value="GAMMA CARBONIC ANHYDRASE-LIKE 1, MITOCHONDRIAL-RELATED"/>
    <property type="match status" value="1"/>
</dbReference>
<dbReference type="Pfam" id="PF00132">
    <property type="entry name" value="Hexapep"/>
    <property type="match status" value="1"/>
</dbReference>
<dbReference type="SUPFAM" id="SSF51161">
    <property type="entry name" value="Trimeric LpxA-like enzymes"/>
    <property type="match status" value="1"/>
</dbReference>
<feature type="chain" id="PRO_1000200926" description="Carnitine operon protein CaiE">
    <location>
        <begin position="1"/>
        <end position="196"/>
    </location>
</feature>
<feature type="region of interest" description="Disordered" evidence="2">
    <location>
        <begin position="173"/>
        <end position="196"/>
    </location>
</feature>
<feature type="compositionally biased region" description="Polar residues" evidence="2">
    <location>
        <begin position="187"/>
        <end position="196"/>
    </location>
</feature>
<reference key="1">
    <citation type="journal article" date="2009" name="PLoS Genet.">
        <title>Organised genome dynamics in the Escherichia coli species results in highly diverse adaptive paths.</title>
        <authorList>
            <person name="Touchon M."/>
            <person name="Hoede C."/>
            <person name="Tenaillon O."/>
            <person name="Barbe V."/>
            <person name="Baeriswyl S."/>
            <person name="Bidet P."/>
            <person name="Bingen E."/>
            <person name="Bonacorsi S."/>
            <person name="Bouchier C."/>
            <person name="Bouvet O."/>
            <person name="Calteau A."/>
            <person name="Chiapello H."/>
            <person name="Clermont O."/>
            <person name="Cruveiller S."/>
            <person name="Danchin A."/>
            <person name="Diard M."/>
            <person name="Dossat C."/>
            <person name="Karoui M.E."/>
            <person name="Frapy E."/>
            <person name="Garry L."/>
            <person name="Ghigo J.M."/>
            <person name="Gilles A.M."/>
            <person name="Johnson J."/>
            <person name="Le Bouguenec C."/>
            <person name="Lescat M."/>
            <person name="Mangenot S."/>
            <person name="Martinez-Jehanne V."/>
            <person name="Matic I."/>
            <person name="Nassif X."/>
            <person name="Oztas S."/>
            <person name="Petit M.A."/>
            <person name="Pichon C."/>
            <person name="Rouy Z."/>
            <person name="Ruf C.S."/>
            <person name="Schneider D."/>
            <person name="Tourret J."/>
            <person name="Vacherie B."/>
            <person name="Vallenet D."/>
            <person name="Medigue C."/>
            <person name="Rocha E.P.C."/>
            <person name="Denamur E."/>
        </authorList>
    </citation>
    <scope>NUCLEOTIDE SEQUENCE [LARGE SCALE GENOMIC DNA]</scope>
    <source>
        <strain>S88 / ExPEC</strain>
    </source>
</reference>
<sequence length="196" mass="21159">MSYYAFEGLIPVVHPTAFVHPSAVLIGDVIVGAGVYIGPLASLRGDYGRLIVQAGANIQDGCIMHGYCDTDTIVGENGHIGHGAILHGCVIGRDALVGMNSVIMDGAVIGEESIVAAMSFVKAGFRGEKRQLLMGTPARAVRSVSDDELHWKRLNTKEYQDLVGRCHAALHETQPLRQMEENRPRLQGTTDVTPKR</sequence>
<protein>
    <recommendedName>
        <fullName evidence="1">Carnitine operon protein CaiE</fullName>
    </recommendedName>
</protein>
<organism>
    <name type="scientific">Escherichia coli O45:K1 (strain S88 / ExPEC)</name>
    <dbReference type="NCBI Taxonomy" id="585035"/>
    <lineage>
        <taxon>Bacteria</taxon>
        <taxon>Pseudomonadati</taxon>
        <taxon>Pseudomonadota</taxon>
        <taxon>Gammaproteobacteria</taxon>
        <taxon>Enterobacterales</taxon>
        <taxon>Enterobacteriaceae</taxon>
        <taxon>Escherichia</taxon>
    </lineage>
</organism>
<name>CAIE_ECO45</name>
<comment type="function">
    <text evidence="1">Overproduction of CaiE stimulates the activity of CaiB and CaiD.</text>
</comment>
<comment type="pathway">
    <text evidence="1">Amine and polyamine metabolism; carnitine metabolism.</text>
</comment>
<comment type="similarity">
    <text evidence="1">Belongs to the transferase hexapeptide repeat family.</text>
</comment>
<accession>B7MAF8</accession>
<evidence type="ECO:0000255" key="1">
    <source>
        <dbReference type="HAMAP-Rule" id="MF_01525"/>
    </source>
</evidence>
<evidence type="ECO:0000256" key="2">
    <source>
        <dbReference type="SAM" id="MobiDB-lite"/>
    </source>
</evidence>
<gene>
    <name evidence="1" type="primary">caiE</name>
    <name type="ordered locus">ECS88_0038</name>
</gene>